<proteinExistence type="inferred from homology"/>
<evidence type="ECO:0000250" key="1">
    <source>
        <dbReference type="UniProtKB" id="D0V3Y4"/>
    </source>
</evidence>
<evidence type="ECO:0000250" key="2">
    <source>
        <dbReference type="UniProtKB" id="Q9HWH9"/>
    </source>
</evidence>
<evidence type="ECO:0000305" key="3"/>
<dbReference type="EC" id="1.13.12.-" evidence="2"/>
<dbReference type="EMBL" id="CP000730">
    <property type="protein sequence ID" value="ABX28900.1"/>
    <property type="molecule type" value="Genomic_DNA"/>
</dbReference>
<dbReference type="RefSeq" id="WP_000267247.1">
    <property type="nucleotide sequence ID" value="NC_010079.1"/>
</dbReference>
<dbReference type="SMR" id="A8Z1H7"/>
<dbReference type="KEGG" id="sax:USA300HOU_0879"/>
<dbReference type="HOGENOM" id="CLU_038732_5_1_9"/>
<dbReference type="BioCyc" id="SAUR451516-HMP:GTV5-897-MONOMER"/>
<dbReference type="GO" id="GO:0018580">
    <property type="term" value="F:nitronate monooxygenase activity"/>
    <property type="evidence" value="ECO:0007669"/>
    <property type="project" value="InterPro"/>
</dbReference>
<dbReference type="GO" id="GO:0000166">
    <property type="term" value="F:nucleotide binding"/>
    <property type="evidence" value="ECO:0007669"/>
    <property type="project" value="UniProtKB-KW"/>
</dbReference>
<dbReference type="GO" id="GO:0009636">
    <property type="term" value="P:response to toxic substance"/>
    <property type="evidence" value="ECO:0007669"/>
    <property type="project" value="UniProtKB-KW"/>
</dbReference>
<dbReference type="CDD" id="cd04730">
    <property type="entry name" value="NPD_like"/>
    <property type="match status" value="1"/>
</dbReference>
<dbReference type="FunFam" id="3.20.20.70:FF:000154">
    <property type="entry name" value="Probable nitronate monooxygenase"/>
    <property type="match status" value="1"/>
</dbReference>
<dbReference type="Gene3D" id="3.20.20.70">
    <property type="entry name" value="Aldolase class I"/>
    <property type="match status" value="1"/>
</dbReference>
<dbReference type="InterPro" id="IPR013785">
    <property type="entry name" value="Aldolase_TIM"/>
</dbReference>
<dbReference type="InterPro" id="IPR004136">
    <property type="entry name" value="NMO"/>
</dbReference>
<dbReference type="PANTHER" id="PTHR42747">
    <property type="entry name" value="NITRONATE MONOOXYGENASE-RELATED"/>
    <property type="match status" value="1"/>
</dbReference>
<dbReference type="PANTHER" id="PTHR42747:SF3">
    <property type="entry name" value="NITRONATE MONOOXYGENASE-RELATED"/>
    <property type="match status" value="1"/>
</dbReference>
<dbReference type="Pfam" id="PF03060">
    <property type="entry name" value="NMO"/>
    <property type="match status" value="1"/>
</dbReference>
<dbReference type="SUPFAM" id="SSF51412">
    <property type="entry name" value="Inosine monophosphate dehydrogenase (IMPDH)"/>
    <property type="match status" value="1"/>
</dbReference>
<sequence>MWNKNRLTQMLSIEYPIIQAGMAGSTTPKLVASVSNSGGLGTIGAGYFNTQQLEDEIDYVRQLTSNSFGVNVFVPSQQSYTSSQIENMNAWLKPYRRALHLEEPVVKITEEQQFKCHIDTIIKKQVPVCCFTFGIPSEQIISRLKAANVKLIGTATSVDEAIANEKAGMDAIVAQGSEAGGHRGSFLKPKNQLPMVGTISLVPQIVDVVSIPVIAAGGIMDGRGVLASIVLGAEGVQMGTAFLTSQDSNASELLRDAIINSKETDTVITKAFSGKLARGINNRFIEEMSQYEGDIPDYPIQNELTSSIRKAAANIGDKELIHMWSGQSPRLATTHPANTIMSNIINQINQIMQYK</sequence>
<name>NMO_STAAT</name>
<keyword id="KW-0216">Detoxification</keyword>
<keyword id="KW-0285">Flavoprotein</keyword>
<keyword id="KW-0288">FMN</keyword>
<keyword id="KW-0503">Monooxygenase</keyword>
<keyword id="KW-0547">Nucleotide-binding</keyword>
<keyword id="KW-0560">Oxidoreductase</keyword>
<accession>A8Z1H7</accession>
<protein>
    <recommendedName>
        <fullName>Probable nitronate monooxygenase</fullName>
        <shortName>NMO</shortName>
        <ecNumber evidence="2">1.13.12.-</ecNumber>
    </recommendedName>
    <alternativeName>
        <fullName>Propionate 3-nitronate monooxygenase</fullName>
        <shortName>P3N monooxygenase</shortName>
    </alternativeName>
</protein>
<comment type="function">
    <text evidence="2">Nitronate monooxygenase that uses molecular oxygen to catalyze the oxidative denitrification of alkyl nitronates. Acts on propionate 3-nitronate (P3N), the presumed physiological substrate. Probably functions in the detoxification of P3N, a metabolic poison produced by plants and fungi as a defense mechanism.</text>
</comment>
<comment type="catalytic activity">
    <reaction evidence="1">
        <text>3 propionate 3-nitronate + 3 O2 + H2O = 3 3-oxopropanoate + 2 nitrate + nitrite + H2O2 + 3 H(+)</text>
        <dbReference type="Rhea" id="RHEA:57332"/>
        <dbReference type="ChEBI" id="CHEBI:15377"/>
        <dbReference type="ChEBI" id="CHEBI:15378"/>
        <dbReference type="ChEBI" id="CHEBI:15379"/>
        <dbReference type="ChEBI" id="CHEBI:16240"/>
        <dbReference type="ChEBI" id="CHEBI:16301"/>
        <dbReference type="ChEBI" id="CHEBI:17632"/>
        <dbReference type="ChEBI" id="CHEBI:33190"/>
        <dbReference type="ChEBI" id="CHEBI:136067"/>
    </reaction>
</comment>
<comment type="cofactor">
    <cofactor evidence="2">
        <name>FMN</name>
        <dbReference type="ChEBI" id="CHEBI:58210"/>
    </cofactor>
    <text evidence="2">Binds 1 FMN per subunit.</text>
</comment>
<comment type="miscellaneous">
    <text evidence="3">P3N is a potent irreversible inhibitor of the key enzyme succinate dehydrogenase in the Krebs cycle and electron transport chain. P3N has been shown to be a toxic metabolite to bacteria, plants, fungi, mammals or any organism that uses succinate dehydrogenase.</text>
</comment>
<comment type="similarity">
    <text evidence="3">Belongs to the nitronate monooxygenase family. NMO class I subfamily.</text>
</comment>
<organism>
    <name type="scientific">Staphylococcus aureus (strain USA300 / TCH1516)</name>
    <dbReference type="NCBI Taxonomy" id="451516"/>
    <lineage>
        <taxon>Bacteria</taxon>
        <taxon>Bacillati</taxon>
        <taxon>Bacillota</taxon>
        <taxon>Bacilli</taxon>
        <taxon>Bacillales</taxon>
        <taxon>Staphylococcaceae</taxon>
        <taxon>Staphylococcus</taxon>
    </lineage>
</organism>
<gene>
    <name type="ordered locus">USA300HOU_0879</name>
</gene>
<feature type="chain" id="PRO_0000360900" description="Probable nitronate monooxygenase">
    <location>
        <begin position="1"/>
        <end position="355"/>
    </location>
</feature>
<feature type="binding site" evidence="2">
    <location>
        <position position="71"/>
    </location>
    <ligand>
        <name>FMN</name>
        <dbReference type="ChEBI" id="CHEBI:58210"/>
    </ligand>
</feature>
<feature type="binding site" evidence="2">
    <location>
        <position position="175"/>
    </location>
    <ligand>
        <name>FMN</name>
        <dbReference type="ChEBI" id="CHEBI:58210"/>
    </ligand>
</feature>
<feature type="binding site" evidence="2">
    <location>
        <position position="180"/>
    </location>
    <ligand>
        <name>FMN</name>
        <dbReference type="ChEBI" id="CHEBI:58210"/>
    </ligand>
</feature>
<feature type="binding site" evidence="2">
    <location>
        <position position="218"/>
    </location>
    <ligand>
        <name>FMN</name>
        <dbReference type="ChEBI" id="CHEBI:58210"/>
    </ligand>
</feature>
<feature type="binding site" evidence="2">
    <location>
        <begin position="237"/>
        <end position="240"/>
    </location>
    <ligand>
        <name>FMN</name>
        <dbReference type="ChEBI" id="CHEBI:58210"/>
    </ligand>
</feature>
<reference key="1">
    <citation type="journal article" date="2007" name="BMC Microbiol.">
        <title>Subtle genetic changes enhance virulence of methicillin resistant and sensitive Staphylococcus aureus.</title>
        <authorList>
            <person name="Highlander S.K."/>
            <person name="Hulten K.G."/>
            <person name="Qin X."/>
            <person name="Jiang H."/>
            <person name="Yerrapragada S."/>
            <person name="Mason E.O. Jr."/>
            <person name="Shang Y."/>
            <person name="Williams T.M."/>
            <person name="Fortunov R.M."/>
            <person name="Liu Y."/>
            <person name="Igboeli O."/>
            <person name="Petrosino J."/>
            <person name="Tirumalai M."/>
            <person name="Uzman A."/>
            <person name="Fox G.E."/>
            <person name="Cardenas A.M."/>
            <person name="Muzny D.M."/>
            <person name="Hemphill L."/>
            <person name="Ding Y."/>
            <person name="Dugan S."/>
            <person name="Blyth P.R."/>
            <person name="Buhay C.J."/>
            <person name="Dinh H.H."/>
            <person name="Hawes A.C."/>
            <person name="Holder M."/>
            <person name="Kovar C.L."/>
            <person name="Lee S.L."/>
            <person name="Liu W."/>
            <person name="Nazareth L.V."/>
            <person name="Wang Q."/>
            <person name="Zhou J."/>
            <person name="Kaplan S.L."/>
            <person name="Weinstock G.M."/>
        </authorList>
    </citation>
    <scope>NUCLEOTIDE SEQUENCE [LARGE SCALE GENOMIC DNA]</scope>
    <source>
        <strain>USA300 / TCH1516</strain>
    </source>
</reference>